<dbReference type="EMBL" id="AY261361">
    <property type="status" value="NOT_ANNOTATED_CDS"/>
    <property type="molecule type" value="Genomic_DNA"/>
</dbReference>
<dbReference type="SMR" id="P0CA06"/>
<dbReference type="Proteomes" id="UP000000860">
    <property type="component" value="Segment"/>
</dbReference>
<dbReference type="GO" id="GO:0044220">
    <property type="term" value="C:host cell perinuclear region of cytoplasm"/>
    <property type="evidence" value="ECO:0007669"/>
    <property type="project" value="UniProtKB-SubCell"/>
</dbReference>
<dbReference type="GO" id="GO:0044423">
    <property type="term" value="C:virion component"/>
    <property type="evidence" value="ECO:0007669"/>
    <property type="project" value="UniProtKB-KW"/>
</dbReference>
<proteinExistence type="evidence at protein level"/>
<feature type="initiator methionine" description="Removed" evidence="1">
    <location>
        <position position="1"/>
    </location>
</feature>
<feature type="chain" id="PRO_0000373453" description="Polyprotein pp62">
    <location>
        <begin position="2"/>
        <end position="530"/>
    </location>
</feature>
<feature type="chain" id="PRO_0000373454" description="p15">
    <location>
        <begin position="2"/>
        <end position="158"/>
    </location>
</feature>
<feature type="chain" id="PRO_0000373455" description="p35">
    <location>
        <begin position="159"/>
        <end position="463"/>
    </location>
</feature>
<feature type="chain" id="PRO_0000373456" description="p8">
    <location>
        <begin position="464"/>
        <end position="530"/>
    </location>
</feature>
<feature type="site" description="Cleavage; by viral protease S273R" evidence="1">
    <location>
        <begin position="158"/>
        <end position="159"/>
    </location>
</feature>
<feature type="site" description="Cleavage; by viral protease S273R" evidence="1">
    <location>
        <begin position="463"/>
        <end position="464"/>
    </location>
</feature>
<sequence length="530" mass="60563">MPSNMKQFCKISVWLQQHDPDLLEIINNLCMLGNLSAAKYKHGVTFIYPKQAKIRDEIKKHAYSNDPSQAIKTLESLILPFYIPTPAEFTGEIGSYTGVKLEVEKTEANKVILKNGEAVLIPAADFKPFPDRRLAVWIMESGSMPLEGPPYKRKKEGGGNDPPVPKHISPYTPRTRIAIEVEKAFDDCMRQNWCSVNNPYLAKSVSLLSFLSLNHPTEFIKVLPLIDFDPLVTFYLLLEPYKTHGDDFLIPETVLFGPTGWNGTDLYQSAMLEFKKFFTQITRQTFMDIADTATKEVDVPICYSDPETVHSYANHVRTEILHHNMVNKVTTPNLVVQAYNELEQTNTIRHYGPIFPESTINALRFWKKLWQDEQRFVIHGLHRTLMDQPTYETSEFAEIVRNLRFSRPGNNYINELNITSPAMYGDKHTTGDIAPNDRFAMLVAFINSTDFLYTAIPEEKVGGNDTQTSSLTDLVPTRLHSFLNHNLSKLKILNRAQQTVRNILSNDCLNQLKHYVKHTGKNEILKLLQD</sequence>
<comment type="function">
    <molecule>Polyprotein pp62</molecule>
    <text evidence="1">Essential for the correct assembly and maturation of the core of the virion.</text>
</comment>
<comment type="function">
    <molecule>p35</molecule>
    <text evidence="1">Component of the core shell (By similarity). Binds to phosphatidylserine, which may enable the core shell binding with the inner membrane (By similarity).</text>
</comment>
<comment type="function">
    <molecule>p15</molecule>
    <text evidence="1">Component of the core shell (By similarity). Binds to phosphatidylserine and DNA, which may link the core shell to the inner membrane and to the viral nucleoid (By similarity).</text>
</comment>
<comment type="function">
    <molecule>p8</molecule>
    <text evidence="1">Component of the core shell.</text>
</comment>
<comment type="subunit">
    <molecule>p35</molecule>
    <text evidence="1">Monomer (By similarity). Predominantly exists as a monomer, with very little dimers (By similarity). Homodimerization seems to be linked to low pH (By similarity).</text>
</comment>
<comment type="subunit">
    <molecule>p15</molecule>
    <text evidence="1">Homodimer; disulfide-linked (By similarity). Homotrimer; disulfide-linked (By similarity). Homohexamer (By similarity).</text>
</comment>
<comment type="subcellular location">
    <molecule>Polyprotein pp62</molecule>
    <subcellularLocation>
        <location evidence="1">Host cytoplasm</location>
        <location evidence="1">Host perinuclear region</location>
    </subcellularLocation>
    <text evidence="1">Found in perinuclear cytoplasmic viral factories during assembly.</text>
</comment>
<comment type="subcellular location">
    <molecule>p35</molecule>
    <subcellularLocation>
        <location evidence="1">Virion</location>
    </subcellularLocation>
    <text evidence="1">Located in the core shell, which functions like a matrix between the DNA and the inner envelope.</text>
</comment>
<comment type="subcellular location">
    <molecule>p15</molecule>
    <subcellularLocation>
        <location evidence="2">Virion</location>
    </subcellularLocation>
    <text evidence="1">Located in the core shell, which functions like a matrix between the DNA and the inner envelope.</text>
</comment>
<comment type="subcellular location">
    <molecule>p8</molecule>
    <subcellularLocation>
        <location evidence="1">Virion</location>
    </subcellularLocation>
    <text evidence="1">Located in the core shell, which functions like a matrix between the DNA and the inner envelope.</text>
</comment>
<comment type="induction">
    <text evidence="1">Expressed in the late phase of the viral replicative cycle.</text>
</comment>
<comment type="PTM">
    <molecule>p15</molecule>
    <text evidence="2">Monoubiquitinated in vitro by viral UBCv1.</text>
</comment>
<comment type="PTM">
    <molecule>Polyprotein pp62</molecule>
    <text evidence="1">Specific enzymatic cleavages in vivo yield mature proteins.</text>
</comment>
<comment type="similarity">
    <text evidence="3">Belongs to the asfivirus polyprotein pp62 family.</text>
</comment>
<accession>P0CA06</accession>
<protein>
    <recommendedName>
        <fullName>Polyprotein pp62</fullName>
    </recommendedName>
    <alternativeName>
        <fullName evidence="1">60 kDa polyprotein</fullName>
        <shortName>p60</shortName>
    </alternativeName>
    <alternativeName>
        <fullName>62 kDa polyprotein</fullName>
        <shortName>p62</shortName>
    </alternativeName>
    <component>
        <recommendedName>
            <fullName evidence="1">p15</fullName>
        </recommendedName>
        <alternativeName>
            <fullName>PIG1</fullName>
        </alternativeName>
    </component>
    <component>
        <recommendedName>
            <fullName evidence="1">p35</fullName>
        </recommendedName>
    </component>
    <component>
        <recommendedName>
            <fullName evidence="1">p8</fullName>
        </recommendedName>
    </component>
</protein>
<name>PP62_ASFM2</name>
<organism>
    <name type="scientific">African swine fever virus (isolate Tick/Malawi/Lil 20-1/1983)</name>
    <name type="common">ASFV</name>
    <dbReference type="NCBI Taxonomy" id="10500"/>
    <lineage>
        <taxon>Viruses</taxon>
        <taxon>Varidnaviria</taxon>
        <taxon>Bamfordvirae</taxon>
        <taxon>Nucleocytoviricota</taxon>
        <taxon>Pokkesviricetes</taxon>
        <taxon>Asfuvirales</taxon>
        <taxon>Asfarviridae</taxon>
        <taxon>Asfivirus</taxon>
        <taxon>African swine fever virus</taxon>
    </lineage>
</organism>
<evidence type="ECO:0000250" key="1">
    <source>
        <dbReference type="UniProtKB" id="Q65179"/>
    </source>
</evidence>
<evidence type="ECO:0000269" key="2">
    <source>
    </source>
</evidence>
<evidence type="ECO:0000305" key="3"/>
<keyword id="KW-1015">Disulfide bond</keyword>
<keyword id="KW-1035">Host cytoplasm</keyword>
<keyword id="KW-0426">Late protein</keyword>
<keyword id="KW-0832">Ubl conjugation</keyword>
<keyword id="KW-0946">Virion</keyword>
<gene>
    <name type="ordered locus">Mal-102</name>
</gene>
<organismHost>
    <name type="scientific">Ornithodoros</name>
    <name type="common">relapsing fever ticks</name>
    <dbReference type="NCBI Taxonomy" id="6937"/>
</organismHost>
<organismHost>
    <name type="scientific">Phacochoerus aethiopicus</name>
    <name type="common">Warthog</name>
    <dbReference type="NCBI Taxonomy" id="85517"/>
</organismHost>
<organismHost>
    <name type="scientific">Phacochoerus africanus</name>
    <name type="common">Warthog</name>
    <dbReference type="NCBI Taxonomy" id="41426"/>
</organismHost>
<organismHost>
    <name type="scientific">Potamochoerus larvatus</name>
    <name type="common">Bushpig</name>
    <dbReference type="NCBI Taxonomy" id="273792"/>
</organismHost>
<organismHost>
    <name type="scientific">Sus scrofa</name>
    <name type="common">Pig</name>
    <dbReference type="NCBI Taxonomy" id="9823"/>
</organismHost>
<reference key="1">
    <citation type="submission" date="2003-03" db="EMBL/GenBank/DDBJ databases">
        <title>African swine fever virus genomes.</title>
        <authorList>
            <person name="Kutish G.F."/>
            <person name="Rock D.L."/>
        </authorList>
    </citation>
    <scope>NUCLEOTIDE SEQUENCE [LARGE SCALE GENOMIC DNA]</scope>
</reference>
<reference key="2">
    <citation type="journal article" date="1995" name="J. Virol.">
        <title>Characterization of a ubiquitinated protein which is externally located in African swine fever virions.</title>
        <authorList>
            <person name="Hingamp P.M."/>
            <person name="Leyland M.L."/>
            <person name="Webb J."/>
            <person name="Twigger S."/>
            <person name="Mayer R.J."/>
            <person name="Dixon L.K."/>
        </authorList>
    </citation>
    <scope>SUBCELLULAR LOCATION (P15)</scope>
    <scope>UBIQUITINATION (P15)</scope>
</reference>